<gene>
    <name type="primary">lyrm4</name>
    <name type="synonym">isd11</name>
    <name type="ORF">DDB_G0290725</name>
</gene>
<accession>Q54FN9</accession>
<comment type="function">
    <text evidence="1">Required for nuclear and mitochondrial iron-sulfur protein biosynthesis.</text>
</comment>
<comment type="pathway">
    <text>Cofactor biosynthesis; iron-sulfur cluster biosynthesis.</text>
</comment>
<comment type="subcellular location">
    <subcellularLocation>
        <location evidence="1">Mitochondrion</location>
    </subcellularLocation>
    <subcellularLocation>
        <location evidence="1">Nucleus</location>
    </subcellularLocation>
</comment>
<comment type="similarity">
    <text evidence="2">Belongs to the complex I LYR family.</text>
</comment>
<keyword id="KW-0496">Mitochondrion</keyword>
<keyword id="KW-0539">Nucleus</keyword>
<keyword id="KW-1185">Reference proteome</keyword>
<reference key="1">
    <citation type="journal article" date="2005" name="Nature">
        <title>The genome of the social amoeba Dictyostelium discoideum.</title>
        <authorList>
            <person name="Eichinger L."/>
            <person name="Pachebat J.A."/>
            <person name="Gloeckner G."/>
            <person name="Rajandream M.A."/>
            <person name="Sucgang R."/>
            <person name="Berriman M."/>
            <person name="Song J."/>
            <person name="Olsen R."/>
            <person name="Szafranski K."/>
            <person name="Xu Q."/>
            <person name="Tunggal B."/>
            <person name="Kummerfeld S."/>
            <person name="Madera M."/>
            <person name="Konfortov B.A."/>
            <person name="Rivero F."/>
            <person name="Bankier A.T."/>
            <person name="Lehmann R."/>
            <person name="Hamlin N."/>
            <person name="Davies R."/>
            <person name="Gaudet P."/>
            <person name="Fey P."/>
            <person name="Pilcher K."/>
            <person name="Chen G."/>
            <person name="Saunders D."/>
            <person name="Sodergren E.J."/>
            <person name="Davis P."/>
            <person name="Kerhornou A."/>
            <person name="Nie X."/>
            <person name="Hall N."/>
            <person name="Anjard C."/>
            <person name="Hemphill L."/>
            <person name="Bason N."/>
            <person name="Farbrother P."/>
            <person name="Desany B."/>
            <person name="Just E."/>
            <person name="Morio T."/>
            <person name="Rost R."/>
            <person name="Churcher C.M."/>
            <person name="Cooper J."/>
            <person name="Haydock S."/>
            <person name="van Driessche N."/>
            <person name="Cronin A."/>
            <person name="Goodhead I."/>
            <person name="Muzny D.M."/>
            <person name="Mourier T."/>
            <person name="Pain A."/>
            <person name="Lu M."/>
            <person name="Harper D."/>
            <person name="Lindsay R."/>
            <person name="Hauser H."/>
            <person name="James K.D."/>
            <person name="Quiles M."/>
            <person name="Madan Babu M."/>
            <person name="Saito T."/>
            <person name="Buchrieser C."/>
            <person name="Wardroper A."/>
            <person name="Felder M."/>
            <person name="Thangavelu M."/>
            <person name="Johnson D."/>
            <person name="Knights A."/>
            <person name="Loulseged H."/>
            <person name="Mungall K.L."/>
            <person name="Oliver K."/>
            <person name="Price C."/>
            <person name="Quail M.A."/>
            <person name="Urushihara H."/>
            <person name="Hernandez J."/>
            <person name="Rabbinowitsch E."/>
            <person name="Steffen D."/>
            <person name="Sanders M."/>
            <person name="Ma J."/>
            <person name="Kohara Y."/>
            <person name="Sharp S."/>
            <person name="Simmonds M.N."/>
            <person name="Spiegler S."/>
            <person name="Tivey A."/>
            <person name="Sugano S."/>
            <person name="White B."/>
            <person name="Walker D."/>
            <person name="Woodward J.R."/>
            <person name="Winckler T."/>
            <person name="Tanaka Y."/>
            <person name="Shaulsky G."/>
            <person name="Schleicher M."/>
            <person name="Weinstock G.M."/>
            <person name="Rosenthal A."/>
            <person name="Cox E.C."/>
            <person name="Chisholm R.L."/>
            <person name="Gibbs R.A."/>
            <person name="Loomis W.F."/>
            <person name="Platzer M."/>
            <person name="Kay R.R."/>
            <person name="Williams J.G."/>
            <person name="Dear P.H."/>
            <person name="Noegel A.A."/>
            <person name="Barrell B.G."/>
            <person name="Kuspa A."/>
        </authorList>
    </citation>
    <scope>NUCLEOTIDE SEQUENCE [LARGE SCALE GENOMIC DNA]</scope>
    <source>
        <strain>AX4</strain>
    </source>
</reference>
<organism>
    <name type="scientific">Dictyostelium discoideum</name>
    <name type="common">Social amoeba</name>
    <dbReference type="NCBI Taxonomy" id="44689"/>
    <lineage>
        <taxon>Eukaryota</taxon>
        <taxon>Amoebozoa</taxon>
        <taxon>Evosea</taxon>
        <taxon>Eumycetozoa</taxon>
        <taxon>Dictyostelia</taxon>
        <taxon>Dictyosteliales</taxon>
        <taxon>Dictyosteliaceae</taxon>
        <taxon>Dictyostelium</taxon>
    </lineage>
</organism>
<proteinExistence type="inferred from homology"/>
<evidence type="ECO:0000250" key="1"/>
<evidence type="ECO:0000305" key="2"/>
<feature type="chain" id="PRO_0000328016" description="LYR motif-containing protein 4">
    <location>
        <begin position="1"/>
        <end position="81"/>
    </location>
</feature>
<protein>
    <recommendedName>
        <fullName>LYR motif-containing protein 4</fullName>
    </recommendedName>
</protein>
<dbReference type="EMBL" id="AAFI02000169">
    <property type="protein sequence ID" value="EAL62068.1"/>
    <property type="molecule type" value="Genomic_DNA"/>
</dbReference>
<dbReference type="RefSeq" id="XP_635573.1">
    <property type="nucleotide sequence ID" value="XM_630481.1"/>
</dbReference>
<dbReference type="SMR" id="Q54FN9"/>
<dbReference type="FunCoup" id="Q54FN9">
    <property type="interactions" value="259"/>
</dbReference>
<dbReference type="STRING" id="44689.Q54FN9"/>
<dbReference type="PaxDb" id="44689-DDB0232412"/>
<dbReference type="EnsemblProtists" id="EAL62068">
    <property type="protein sequence ID" value="EAL62068"/>
    <property type="gene ID" value="DDB_G0290725"/>
</dbReference>
<dbReference type="GeneID" id="8627797"/>
<dbReference type="KEGG" id="ddi:DDB_G0290725"/>
<dbReference type="dictyBase" id="DDB_G0290725">
    <property type="gene designation" value="lyrm4"/>
</dbReference>
<dbReference type="VEuPathDB" id="AmoebaDB:DDB_G0290725"/>
<dbReference type="eggNOG" id="KOG3801">
    <property type="taxonomic scope" value="Eukaryota"/>
</dbReference>
<dbReference type="HOGENOM" id="CLU_120076_3_0_1"/>
<dbReference type="InParanoid" id="Q54FN9"/>
<dbReference type="OMA" id="YTTDKLV"/>
<dbReference type="PhylomeDB" id="Q54FN9"/>
<dbReference type="Reactome" id="R-DDI-1362409">
    <property type="pathway name" value="Mitochondrial iron-sulfur cluster biogenesis"/>
</dbReference>
<dbReference type="Reactome" id="R-DDI-9865881">
    <property type="pathway name" value="Complex III assembly"/>
</dbReference>
<dbReference type="UniPathway" id="UPA00266"/>
<dbReference type="PRO" id="PR:Q54FN9"/>
<dbReference type="Proteomes" id="UP000002195">
    <property type="component" value="Chromosome 5"/>
</dbReference>
<dbReference type="GO" id="GO:1990221">
    <property type="term" value="C:L-cysteine desulfurase complex"/>
    <property type="evidence" value="ECO:0000318"/>
    <property type="project" value="GO_Central"/>
</dbReference>
<dbReference type="GO" id="GO:0005739">
    <property type="term" value="C:mitochondrion"/>
    <property type="evidence" value="ECO:0000318"/>
    <property type="project" value="GO_Central"/>
</dbReference>
<dbReference type="GO" id="GO:0005634">
    <property type="term" value="C:nucleus"/>
    <property type="evidence" value="ECO:0007669"/>
    <property type="project" value="UniProtKB-SubCell"/>
</dbReference>
<dbReference type="GO" id="GO:0016226">
    <property type="term" value="P:iron-sulfur cluster assembly"/>
    <property type="evidence" value="ECO:0000318"/>
    <property type="project" value="GO_Central"/>
</dbReference>
<dbReference type="CDD" id="cd20264">
    <property type="entry name" value="Complex1_LYR_LYRM4"/>
    <property type="match status" value="1"/>
</dbReference>
<dbReference type="InterPro" id="IPR008011">
    <property type="entry name" value="Complex1_LYR_dom"/>
</dbReference>
<dbReference type="InterPro" id="IPR045297">
    <property type="entry name" value="Complex1_LYR_LYRM4"/>
</dbReference>
<dbReference type="InterPro" id="IPR051522">
    <property type="entry name" value="ISC_assembly_LYR"/>
</dbReference>
<dbReference type="PANTHER" id="PTHR13166:SF7">
    <property type="entry name" value="LYR MOTIF-CONTAINING PROTEIN 4"/>
    <property type="match status" value="1"/>
</dbReference>
<dbReference type="PANTHER" id="PTHR13166">
    <property type="entry name" value="PROTEIN C6ORF149"/>
    <property type="match status" value="1"/>
</dbReference>
<dbReference type="Pfam" id="PF05347">
    <property type="entry name" value="Complex1_LYR"/>
    <property type="match status" value="1"/>
</dbReference>
<name>LYRM4_DICDI</name>
<sequence length="81" mass="9679">MSQKSVVLHLYRSLVRESKKFSSYNFREYSLRRVSVGFRENKNKDQNETKELIQDALKNLEMVKRQAFINSMYSTNKLVVE</sequence>